<accession>Q99K10</accession>
<keyword id="KW-0002">3D-structure</keyword>
<keyword id="KW-0025">Alternative splicing</keyword>
<keyword id="KW-0090">Biological rhythms</keyword>
<keyword id="KW-0130">Cell adhesion</keyword>
<keyword id="KW-1003">Cell membrane</keyword>
<keyword id="KW-1015">Disulfide bond</keyword>
<keyword id="KW-0325">Glycoprotein</keyword>
<keyword id="KW-0472">Membrane</keyword>
<keyword id="KW-1185">Reference proteome</keyword>
<keyword id="KW-0964">Secreted</keyword>
<keyword id="KW-0732">Signal</keyword>
<keyword id="KW-0770">Synapse</keyword>
<keyword id="KW-0812">Transmembrane</keyword>
<keyword id="KW-1133">Transmembrane helix</keyword>
<name>NLGN1_MOUSE</name>
<gene>
    <name type="primary">Nlgn1</name>
    <name type="synonym">Kiaa1070</name>
</gene>
<dbReference type="EMBL" id="AK122433">
    <property type="protein sequence ID" value="BAC65715.1"/>
    <property type="status" value="ALT_INIT"/>
    <property type="molecule type" value="mRNA"/>
</dbReference>
<dbReference type="EMBL" id="BC005523">
    <property type="protein sequence ID" value="AAH05523.1"/>
    <property type="molecule type" value="mRNA"/>
</dbReference>
<dbReference type="CCDS" id="CCDS17268.1">
    <molecule id="Q99K10-1"/>
</dbReference>
<dbReference type="RefSeq" id="NP_619607.2">
    <molecule id="Q99K10-1"/>
    <property type="nucleotide sequence ID" value="NM_138666.3"/>
</dbReference>
<dbReference type="RefSeq" id="XP_036018840.1">
    <molecule id="Q99K10-1"/>
    <property type="nucleotide sequence ID" value="XM_036162947.1"/>
</dbReference>
<dbReference type="RefSeq" id="XP_036018842.1">
    <molecule id="Q99K10-1"/>
    <property type="nucleotide sequence ID" value="XM_036162949.1"/>
</dbReference>
<dbReference type="RefSeq" id="XP_036018843.1">
    <molecule id="Q99K10-1"/>
    <property type="nucleotide sequence ID" value="XM_036162950.1"/>
</dbReference>
<dbReference type="PDB" id="3B3Q">
    <property type="method" value="X-ray"/>
    <property type="resolution" value="2.40 A"/>
    <property type="chains" value="A/B=46-635"/>
</dbReference>
<dbReference type="PDBsum" id="3B3Q"/>
<dbReference type="SMR" id="Q99K10"/>
<dbReference type="BioGRID" id="228657">
    <property type="interactions" value="3"/>
</dbReference>
<dbReference type="ComplexPortal" id="CPX-4122">
    <property type="entry name" value="NLGN1(+SSA+SSB) - NRXN1-beta(-SS4) complex"/>
</dbReference>
<dbReference type="DIP" id="DIP-32027N"/>
<dbReference type="FunCoup" id="Q99K10">
    <property type="interactions" value="684"/>
</dbReference>
<dbReference type="IntAct" id="Q99K10">
    <property type="interactions" value="5"/>
</dbReference>
<dbReference type="MINT" id="Q99K10"/>
<dbReference type="STRING" id="10090.ENSMUSP00000142200"/>
<dbReference type="ESTHER" id="mouse-1neur">
    <property type="family name" value="Neuroligin"/>
</dbReference>
<dbReference type="MEROPS" id="S09.994"/>
<dbReference type="GlyCosmos" id="Q99K10">
    <property type="glycosylation" value="6 sites, No reported glycans"/>
</dbReference>
<dbReference type="GlyGen" id="Q99K10">
    <property type="glycosylation" value="9 sites, 2 N-linked glycans (3 sites), 1 O-linked glycan (1 site)"/>
</dbReference>
<dbReference type="iPTMnet" id="Q99K10"/>
<dbReference type="PhosphoSitePlus" id="Q99K10"/>
<dbReference type="SwissPalm" id="Q99K10"/>
<dbReference type="PaxDb" id="10090-ENSMUSP00000074565"/>
<dbReference type="PeptideAtlas" id="Q99K10"/>
<dbReference type="ProteomicsDB" id="293573">
    <molecule id="Q99K10-1"/>
</dbReference>
<dbReference type="ProteomicsDB" id="293574">
    <molecule id="Q99K10-2"/>
</dbReference>
<dbReference type="Pumba" id="Q99K10"/>
<dbReference type="ABCD" id="Q99K10">
    <property type="antibodies" value="1 sequenced antibody"/>
</dbReference>
<dbReference type="Antibodypedia" id="1513">
    <property type="antibodies" value="280 antibodies from 35 providers"/>
</dbReference>
<dbReference type="DNASU" id="192167"/>
<dbReference type="Ensembl" id="ENSMUST00000075054.10">
    <molecule id="Q99K10-1"/>
    <property type="protein sequence ID" value="ENSMUSP00000074565.5"/>
    <property type="gene ID" value="ENSMUSG00000063887.14"/>
</dbReference>
<dbReference type="Ensembl" id="ENSMUST00000193603.6">
    <molecule id="Q99K10-1"/>
    <property type="protein sequence ID" value="ENSMUSP00000142200.2"/>
    <property type="gene ID" value="ENSMUSG00000063887.14"/>
</dbReference>
<dbReference type="GeneID" id="192167"/>
<dbReference type="KEGG" id="mmu:192167"/>
<dbReference type="UCSC" id="uc008otc.1">
    <molecule id="Q99K10-1"/>
    <property type="organism name" value="mouse"/>
</dbReference>
<dbReference type="UCSC" id="uc008otd.1">
    <molecule id="Q99K10-2"/>
    <property type="organism name" value="mouse"/>
</dbReference>
<dbReference type="AGR" id="MGI:2179435"/>
<dbReference type="CTD" id="22871"/>
<dbReference type="MGI" id="MGI:2179435">
    <property type="gene designation" value="Nlgn1"/>
</dbReference>
<dbReference type="VEuPathDB" id="HostDB:ENSMUSG00000063887"/>
<dbReference type="eggNOG" id="KOG1516">
    <property type="taxonomic scope" value="Eukaryota"/>
</dbReference>
<dbReference type="GeneTree" id="ENSGT00940000155789"/>
<dbReference type="InParanoid" id="Q99K10"/>
<dbReference type="OMA" id="SLHPHDM"/>
<dbReference type="OrthoDB" id="408631at2759"/>
<dbReference type="PhylomeDB" id="Q99K10"/>
<dbReference type="TreeFam" id="TF326187"/>
<dbReference type="Reactome" id="R-MMU-6794361">
    <property type="pathway name" value="Neurexins and neuroligins"/>
</dbReference>
<dbReference type="BioGRID-ORCS" id="192167">
    <property type="hits" value="2 hits in 77 CRISPR screens"/>
</dbReference>
<dbReference type="ChiTaRS" id="Nlgn1">
    <property type="organism name" value="mouse"/>
</dbReference>
<dbReference type="EvolutionaryTrace" id="Q99K10"/>
<dbReference type="PRO" id="PR:Q99K10"/>
<dbReference type="Proteomes" id="UP000000589">
    <property type="component" value="Chromosome 3"/>
</dbReference>
<dbReference type="RNAct" id="Q99K10">
    <property type="molecule type" value="protein"/>
</dbReference>
<dbReference type="Bgee" id="ENSMUSG00000063887">
    <property type="expression patterns" value="Expressed in olfactory tubercle and 119 other cell types or tissues"/>
</dbReference>
<dbReference type="ExpressionAtlas" id="Q99K10">
    <property type="expression patterns" value="baseline and differential"/>
</dbReference>
<dbReference type="GO" id="GO:0009986">
    <property type="term" value="C:cell surface"/>
    <property type="evidence" value="ECO:0000314"/>
    <property type="project" value="ARUK-UCL"/>
</dbReference>
<dbReference type="GO" id="GO:0030425">
    <property type="term" value="C:dendrite"/>
    <property type="evidence" value="ECO:0000250"/>
    <property type="project" value="BHF-UCL"/>
</dbReference>
<dbReference type="GO" id="GO:0043197">
    <property type="term" value="C:dendritic spine"/>
    <property type="evidence" value="ECO:0000250"/>
    <property type="project" value="BHF-UCL"/>
</dbReference>
<dbReference type="GO" id="GO:0060076">
    <property type="term" value="C:excitatory synapse"/>
    <property type="evidence" value="ECO:0000303"/>
    <property type="project" value="ComplexPortal"/>
</dbReference>
<dbReference type="GO" id="GO:0009897">
    <property type="term" value="C:external side of plasma membrane"/>
    <property type="evidence" value="ECO:0000314"/>
    <property type="project" value="MGI"/>
</dbReference>
<dbReference type="GO" id="GO:0032433">
    <property type="term" value="C:filopodium tip"/>
    <property type="evidence" value="ECO:0000250"/>
    <property type="project" value="BHF-UCL"/>
</dbReference>
<dbReference type="GO" id="GO:0098978">
    <property type="term" value="C:glutamatergic synapse"/>
    <property type="evidence" value="ECO:0000314"/>
    <property type="project" value="SynGO"/>
</dbReference>
<dbReference type="GO" id="GO:0005794">
    <property type="term" value="C:Golgi apparatus"/>
    <property type="evidence" value="ECO:0000250"/>
    <property type="project" value="BHF-UCL"/>
</dbReference>
<dbReference type="GO" id="GO:0031594">
    <property type="term" value="C:neuromuscular junction"/>
    <property type="evidence" value="ECO:0000303"/>
    <property type="project" value="ComplexPortal"/>
</dbReference>
<dbReference type="GO" id="GO:0098984">
    <property type="term" value="C:neuron to neuron synapse"/>
    <property type="evidence" value="ECO:0000303"/>
    <property type="project" value="ComplexPortal"/>
</dbReference>
<dbReference type="GO" id="GO:0005886">
    <property type="term" value="C:plasma membrane"/>
    <property type="evidence" value="ECO:0000315"/>
    <property type="project" value="UniProtKB"/>
</dbReference>
<dbReference type="GO" id="GO:0014069">
    <property type="term" value="C:postsynaptic density"/>
    <property type="evidence" value="ECO:0007669"/>
    <property type="project" value="UniProtKB-SubCell"/>
</dbReference>
<dbReference type="GO" id="GO:0099634">
    <property type="term" value="C:postsynaptic specialization membrane"/>
    <property type="evidence" value="ECO:0000250"/>
    <property type="project" value="BHF-UCL"/>
</dbReference>
<dbReference type="GO" id="GO:0098793">
    <property type="term" value="C:presynapse"/>
    <property type="evidence" value="ECO:0007669"/>
    <property type="project" value="GOC"/>
</dbReference>
<dbReference type="GO" id="GO:0098635">
    <property type="term" value="C:protein complex involved in cell-cell adhesion"/>
    <property type="evidence" value="ECO:0000266"/>
    <property type="project" value="ComplexPortal"/>
</dbReference>
<dbReference type="GO" id="GO:0043235">
    <property type="term" value="C:receptor complex"/>
    <property type="evidence" value="ECO:0000314"/>
    <property type="project" value="BHF-UCL"/>
</dbReference>
<dbReference type="GO" id="GO:0045202">
    <property type="term" value="C:synapse"/>
    <property type="evidence" value="ECO:0000314"/>
    <property type="project" value="MGI"/>
</dbReference>
<dbReference type="GO" id="GO:0043083">
    <property type="term" value="C:synaptic cleft"/>
    <property type="evidence" value="ECO:0007669"/>
    <property type="project" value="UniProtKB-SubCell"/>
</dbReference>
<dbReference type="GO" id="GO:0042802">
    <property type="term" value="F:identical protein binding"/>
    <property type="evidence" value="ECO:0000250"/>
    <property type="project" value="BHF-UCL"/>
</dbReference>
<dbReference type="GO" id="GO:0042043">
    <property type="term" value="F:neurexin family protein binding"/>
    <property type="evidence" value="ECO:0000315"/>
    <property type="project" value="UniProtKB"/>
</dbReference>
<dbReference type="GO" id="GO:0097113">
    <property type="term" value="P:AMPA glutamate receptor clustering"/>
    <property type="evidence" value="ECO:0000314"/>
    <property type="project" value="BHF-UCL"/>
</dbReference>
<dbReference type="GO" id="GO:0098990">
    <property type="term" value="P:AMPA selective glutamate receptor signaling pathway"/>
    <property type="evidence" value="ECO:0000250"/>
    <property type="project" value="BHF-UCL"/>
</dbReference>
<dbReference type="GO" id="GO:0016339">
    <property type="term" value="P:calcium-dependent cell-cell adhesion via plasma membrane cell adhesion molecules"/>
    <property type="evidence" value="ECO:0000314"/>
    <property type="project" value="BHF-UCL"/>
</dbReference>
<dbReference type="GO" id="GO:0090125">
    <property type="term" value="P:cell-cell adhesion involved in synapse maturation"/>
    <property type="evidence" value="ECO:0000303"/>
    <property type="project" value="ComplexPortal"/>
</dbReference>
<dbReference type="GO" id="GO:0048789">
    <property type="term" value="P:cytoskeletal matrix organization at active zone"/>
    <property type="evidence" value="ECO:0000315"/>
    <property type="project" value="BHF-UCL"/>
</dbReference>
<dbReference type="GO" id="GO:0045184">
    <property type="term" value="P:establishment of protein localization"/>
    <property type="evidence" value="ECO:0000315"/>
    <property type="project" value="BHF-UCL"/>
</dbReference>
<dbReference type="GO" id="GO:1904861">
    <property type="term" value="P:excitatory synapse assembly"/>
    <property type="evidence" value="ECO:0000314"/>
    <property type="project" value="ParkinsonsUK-UCL"/>
</dbReference>
<dbReference type="GO" id="GO:0007157">
    <property type="term" value="P:heterophilic cell-cell adhesion via plasma membrane cell adhesion molecules"/>
    <property type="evidence" value="ECO:0000314"/>
    <property type="project" value="BHF-UCL"/>
</dbReference>
<dbReference type="GO" id="GO:0099558">
    <property type="term" value="P:maintenance of synapse structure"/>
    <property type="evidence" value="ECO:0000303"/>
    <property type="project" value="ComplexPortal"/>
</dbReference>
<dbReference type="GO" id="GO:0050804">
    <property type="term" value="P:modulation of chemical synaptic transmission"/>
    <property type="evidence" value="ECO:0000316"/>
    <property type="project" value="MGI"/>
</dbReference>
<dbReference type="GO" id="GO:0061002">
    <property type="term" value="P:negative regulation of dendritic spine morphogenesis"/>
    <property type="evidence" value="ECO:0000315"/>
    <property type="project" value="BHF-UCL"/>
</dbReference>
<dbReference type="GO" id="GO:0007399">
    <property type="term" value="P:nervous system development"/>
    <property type="evidence" value="ECO:0000314"/>
    <property type="project" value="UniProtKB"/>
</dbReference>
<dbReference type="GO" id="GO:0097115">
    <property type="term" value="P:neurexin clustering involved in presynaptic membrane assembly"/>
    <property type="evidence" value="ECO:0000314"/>
    <property type="project" value="BHF-UCL"/>
</dbReference>
<dbReference type="GO" id="GO:0007158">
    <property type="term" value="P:neuron cell-cell adhesion"/>
    <property type="evidence" value="ECO:0000314"/>
    <property type="project" value="BHF-UCL"/>
</dbReference>
<dbReference type="GO" id="GO:0048812">
    <property type="term" value="P:neuron projection morphogenesis"/>
    <property type="evidence" value="ECO:0000303"/>
    <property type="project" value="ComplexPortal"/>
</dbReference>
<dbReference type="GO" id="GO:0097114">
    <property type="term" value="P:NMDA glutamate receptor clustering"/>
    <property type="evidence" value="ECO:0000315"/>
    <property type="project" value="BHF-UCL"/>
</dbReference>
<dbReference type="GO" id="GO:0098989">
    <property type="term" value="P:NMDA selective glutamate receptor signaling pathway"/>
    <property type="evidence" value="ECO:0000314"/>
    <property type="project" value="BHF-UCL"/>
</dbReference>
<dbReference type="GO" id="GO:0010841">
    <property type="term" value="P:positive regulation of circadian sleep/wake cycle, wakefulness"/>
    <property type="evidence" value="ECO:0000315"/>
    <property type="project" value="UniProtKB"/>
</dbReference>
<dbReference type="GO" id="GO:0060999">
    <property type="term" value="P:positive regulation of dendritic spine development"/>
    <property type="evidence" value="ECO:0000315"/>
    <property type="project" value="BHF-UCL"/>
</dbReference>
<dbReference type="GO" id="GO:2000463">
    <property type="term" value="P:positive regulation of excitatory postsynaptic potential"/>
    <property type="evidence" value="ECO:0000314"/>
    <property type="project" value="BHF-UCL"/>
</dbReference>
<dbReference type="GO" id="GO:0051491">
    <property type="term" value="P:positive regulation of filopodium assembly"/>
    <property type="evidence" value="ECO:0000250"/>
    <property type="project" value="BHF-UCL"/>
</dbReference>
<dbReference type="GO" id="GO:1900075">
    <property type="term" value="P:positive regulation of neuromuscular synaptic transmission"/>
    <property type="evidence" value="ECO:0000303"/>
    <property type="project" value="ComplexPortal"/>
</dbReference>
<dbReference type="GO" id="GO:0010976">
    <property type="term" value="P:positive regulation of neuron projection development"/>
    <property type="evidence" value="ECO:0000303"/>
    <property type="project" value="ComplexPortal"/>
</dbReference>
<dbReference type="GO" id="GO:0051965">
    <property type="term" value="P:positive regulation of synapse assembly"/>
    <property type="evidence" value="ECO:0000314"/>
    <property type="project" value="MGI"/>
</dbReference>
<dbReference type="GO" id="GO:0032230">
    <property type="term" value="P:positive regulation of synaptic transmission, GABAergic"/>
    <property type="evidence" value="ECO:0000250"/>
    <property type="project" value="BHF-UCL"/>
</dbReference>
<dbReference type="GO" id="GO:0051968">
    <property type="term" value="P:positive regulation of synaptic transmission, glutamatergic"/>
    <property type="evidence" value="ECO:0000250"/>
    <property type="project" value="BHF-UCL"/>
</dbReference>
<dbReference type="GO" id="GO:2000809">
    <property type="term" value="P:positive regulation of synaptic vesicle clustering"/>
    <property type="evidence" value="ECO:0000314"/>
    <property type="project" value="BHF-UCL"/>
</dbReference>
<dbReference type="GO" id="GO:1900244">
    <property type="term" value="P:positive regulation of synaptic vesicle endocytosis"/>
    <property type="evidence" value="ECO:0000315"/>
    <property type="project" value="BHF-UCL"/>
</dbReference>
<dbReference type="GO" id="GO:2000302">
    <property type="term" value="P:positive regulation of synaptic vesicle exocytosis"/>
    <property type="evidence" value="ECO:0000315"/>
    <property type="project" value="BHF-UCL"/>
</dbReference>
<dbReference type="GO" id="GO:0097119">
    <property type="term" value="P:postsynaptic density protein 95 clustering"/>
    <property type="evidence" value="ECO:0000314"/>
    <property type="project" value="BHF-UCL"/>
</dbReference>
<dbReference type="GO" id="GO:0097104">
    <property type="term" value="P:postsynaptic membrane assembly"/>
    <property type="evidence" value="ECO:0000314"/>
    <property type="project" value="BHF-UCL"/>
</dbReference>
<dbReference type="GO" id="GO:0098698">
    <property type="term" value="P:postsynaptic specialization assembly"/>
    <property type="evidence" value="ECO:0000314"/>
    <property type="project" value="SynGO"/>
</dbReference>
<dbReference type="GO" id="GO:0097105">
    <property type="term" value="P:presynaptic membrane assembly"/>
    <property type="evidence" value="ECO:0000314"/>
    <property type="project" value="BHF-UCL"/>
</dbReference>
<dbReference type="GO" id="GO:0035418">
    <property type="term" value="P:protein localization to synapse"/>
    <property type="evidence" value="ECO:0000314"/>
    <property type="project" value="BHF-UCL"/>
</dbReference>
<dbReference type="GO" id="GO:0097120">
    <property type="term" value="P:receptor localization to synapse"/>
    <property type="evidence" value="ECO:0000314"/>
    <property type="project" value="BHF-UCL"/>
</dbReference>
<dbReference type="GO" id="GO:0045664">
    <property type="term" value="P:regulation of neuron differentiation"/>
    <property type="evidence" value="ECO:0000314"/>
    <property type="project" value="UniProtKB"/>
</dbReference>
<dbReference type="GO" id="GO:0099151">
    <property type="term" value="P:regulation of postsynaptic density assembly"/>
    <property type="evidence" value="ECO:0000314"/>
    <property type="project" value="SynGO"/>
</dbReference>
<dbReference type="GO" id="GO:0002087">
    <property type="term" value="P:regulation of respiratory gaseous exchange by nervous system process"/>
    <property type="evidence" value="ECO:0000316"/>
    <property type="project" value="MGI"/>
</dbReference>
<dbReference type="GO" id="GO:0048511">
    <property type="term" value="P:rhythmic process"/>
    <property type="evidence" value="ECO:0007669"/>
    <property type="project" value="UniProtKB-KW"/>
</dbReference>
<dbReference type="GO" id="GO:0007416">
    <property type="term" value="P:synapse assembly"/>
    <property type="evidence" value="ECO:0000314"/>
    <property type="project" value="UniProtKB"/>
</dbReference>
<dbReference type="GO" id="GO:0060074">
    <property type="term" value="P:synapse maturation"/>
    <property type="evidence" value="ECO:0000303"/>
    <property type="project" value="ComplexPortal"/>
</dbReference>
<dbReference type="GO" id="GO:0050808">
    <property type="term" value="P:synapse organization"/>
    <property type="evidence" value="ECO:0000316"/>
    <property type="project" value="MGI"/>
</dbReference>
<dbReference type="GO" id="GO:0099560">
    <property type="term" value="P:synaptic membrane adhesion"/>
    <property type="evidence" value="ECO:0000314"/>
    <property type="project" value="SynGO"/>
</dbReference>
<dbReference type="GO" id="GO:0097091">
    <property type="term" value="P:synaptic vesicle clustering"/>
    <property type="evidence" value="ECO:0000314"/>
    <property type="project" value="BHF-UCL"/>
</dbReference>
<dbReference type="GO" id="GO:0016080">
    <property type="term" value="P:synaptic vesicle targeting"/>
    <property type="evidence" value="ECO:0000315"/>
    <property type="project" value="UniProtKB"/>
</dbReference>
<dbReference type="GO" id="GO:0072553">
    <property type="term" value="P:terminal button organization"/>
    <property type="evidence" value="ECO:0000315"/>
    <property type="project" value="BHF-UCL"/>
</dbReference>
<dbReference type="FunFam" id="3.40.50.1820:FF:000001">
    <property type="entry name" value="Neuroligin 3 isoform"/>
    <property type="match status" value="1"/>
</dbReference>
<dbReference type="Gene3D" id="3.40.50.1820">
    <property type="entry name" value="alpha/beta hydrolase"/>
    <property type="match status" value="1"/>
</dbReference>
<dbReference type="InterPro" id="IPR029058">
    <property type="entry name" value="AB_hydrolase_fold"/>
</dbReference>
<dbReference type="InterPro" id="IPR002018">
    <property type="entry name" value="CarbesteraseB"/>
</dbReference>
<dbReference type="InterPro" id="IPR019819">
    <property type="entry name" value="Carboxylesterase_B_CS"/>
</dbReference>
<dbReference type="InterPro" id="IPR051093">
    <property type="entry name" value="Neuroligin/BSAL"/>
</dbReference>
<dbReference type="InterPro" id="IPR000460">
    <property type="entry name" value="Nlgn"/>
</dbReference>
<dbReference type="PANTHER" id="PTHR43903">
    <property type="entry name" value="NEUROLIGIN"/>
    <property type="match status" value="1"/>
</dbReference>
<dbReference type="Pfam" id="PF00135">
    <property type="entry name" value="COesterase"/>
    <property type="match status" value="1"/>
</dbReference>
<dbReference type="PRINTS" id="PR01090">
    <property type="entry name" value="NEUROLIGIN"/>
</dbReference>
<dbReference type="SUPFAM" id="SSF53474">
    <property type="entry name" value="alpha/beta-Hydrolases"/>
    <property type="match status" value="1"/>
</dbReference>
<dbReference type="PROSITE" id="PS00941">
    <property type="entry name" value="CARBOXYLESTERASE_B_2"/>
    <property type="match status" value="1"/>
</dbReference>
<proteinExistence type="evidence at protein level"/>
<protein>
    <recommendedName>
        <fullName>Neuroligin-1</fullName>
    </recommendedName>
</protein>
<organism>
    <name type="scientific">Mus musculus</name>
    <name type="common">Mouse</name>
    <dbReference type="NCBI Taxonomy" id="10090"/>
    <lineage>
        <taxon>Eukaryota</taxon>
        <taxon>Metazoa</taxon>
        <taxon>Chordata</taxon>
        <taxon>Craniata</taxon>
        <taxon>Vertebrata</taxon>
        <taxon>Euteleostomi</taxon>
        <taxon>Mammalia</taxon>
        <taxon>Eutheria</taxon>
        <taxon>Euarchontoglires</taxon>
        <taxon>Glires</taxon>
        <taxon>Rodentia</taxon>
        <taxon>Myomorpha</taxon>
        <taxon>Muroidea</taxon>
        <taxon>Muridae</taxon>
        <taxon>Murinae</taxon>
        <taxon>Mus</taxon>
        <taxon>Mus</taxon>
    </lineage>
</organism>
<evidence type="ECO:0000250" key="1"/>
<evidence type="ECO:0000250" key="2">
    <source>
        <dbReference type="UniProtKB" id="Q62765"/>
    </source>
</evidence>
<evidence type="ECO:0000255" key="3"/>
<evidence type="ECO:0000256" key="4">
    <source>
        <dbReference type="SAM" id="MobiDB-lite"/>
    </source>
</evidence>
<evidence type="ECO:0000269" key="5">
    <source>
    </source>
</evidence>
<evidence type="ECO:0000269" key="6">
    <source>
    </source>
</evidence>
<evidence type="ECO:0000269" key="7">
    <source>
    </source>
</evidence>
<evidence type="ECO:0000269" key="8">
    <source>
    </source>
</evidence>
<evidence type="ECO:0000269" key="9">
    <source>
    </source>
</evidence>
<evidence type="ECO:0000269" key="10">
    <source>
    </source>
</evidence>
<evidence type="ECO:0000269" key="11">
    <source>
    </source>
</evidence>
<evidence type="ECO:0000269" key="12">
    <source>
    </source>
</evidence>
<evidence type="ECO:0000269" key="13">
    <source>
    </source>
</evidence>
<evidence type="ECO:0000269" key="14">
    <source>
    </source>
</evidence>
<evidence type="ECO:0000269" key="15">
    <source>
    </source>
</evidence>
<evidence type="ECO:0000269" key="16">
    <source>
    </source>
</evidence>
<evidence type="ECO:0000303" key="17">
    <source>
    </source>
</evidence>
<evidence type="ECO:0000305" key="18"/>
<evidence type="ECO:0007829" key="19">
    <source>
        <dbReference type="PDB" id="3B3Q"/>
    </source>
</evidence>
<feature type="signal peptide" evidence="3">
    <location>
        <begin position="1"/>
        <end position="45"/>
    </location>
</feature>
<feature type="chain" id="PRO_0000008641" description="Neuroligin-1">
    <location>
        <begin position="46"/>
        <end position="843"/>
    </location>
</feature>
<feature type="topological domain" description="Extracellular" evidence="3">
    <location>
        <begin position="46"/>
        <end position="697"/>
    </location>
</feature>
<feature type="transmembrane region" description="Helical" evidence="3">
    <location>
        <begin position="698"/>
        <end position="718"/>
    </location>
</feature>
<feature type="topological domain" description="Cytoplasmic" evidence="3">
    <location>
        <begin position="719"/>
        <end position="843"/>
    </location>
</feature>
<feature type="region of interest" description="Disordered" evidence="4">
    <location>
        <begin position="167"/>
        <end position="190"/>
    </location>
</feature>
<feature type="region of interest" description="Disordered" evidence="4">
    <location>
        <begin position="647"/>
        <end position="688"/>
    </location>
</feature>
<feature type="region of interest" description="Disordered" evidence="4">
    <location>
        <begin position="822"/>
        <end position="843"/>
    </location>
</feature>
<feature type="compositionally biased region" description="Acidic residues" evidence="4">
    <location>
        <begin position="175"/>
        <end position="186"/>
    </location>
</feature>
<feature type="compositionally biased region" description="Polar residues" evidence="4">
    <location>
        <begin position="661"/>
        <end position="670"/>
    </location>
</feature>
<feature type="compositionally biased region" description="Basic residues" evidence="4">
    <location>
        <begin position="831"/>
        <end position="843"/>
    </location>
</feature>
<feature type="glycosylation site" description="N-linked (GlcNAc...) (complex) asparagine" evidence="10">
    <location>
        <position position="109"/>
    </location>
</feature>
<feature type="glycosylation site" description="N-linked (GlcNAc...) (complex) asparagine" evidence="1">
    <location>
        <position position="303"/>
    </location>
</feature>
<feature type="glycosylation site" description="N-linked (GlcNAc...) (complex) asparagine" evidence="1">
    <location>
        <position position="343"/>
    </location>
</feature>
<feature type="glycosylation site" description="N-linked (GlcNAc...) asparagine" evidence="10">
    <location>
        <position position="547"/>
    </location>
</feature>
<feature type="glycosylation site" description="O-linked (GalNAc...) serine" evidence="1">
    <location>
        <position position="683"/>
    </location>
</feature>
<feature type="glycosylation site" description="O-linked (GalNAc...) serine" evidence="1">
    <location>
        <position position="686"/>
    </location>
</feature>
<feature type="disulfide bond" evidence="10">
    <location>
        <begin position="117"/>
        <end position="153"/>
    </location>
</feature>
<feature type="disulfide bond" evidence="10">
    <location>
        <begin position="342"/>
        <end position="353"/>
    </location>
</feature>
<feature type="disulfide bond" evidence="10">
    <location>
        <begin position="512"/>
        <end position="546"/>
    </location>
</feature>
<feature type="splice variant" id="VSP_007528" description="In isoform 2." evidence="17">
    <location>
        <begin position="165"/>
        <end position="184"/>
    </location>
</feature>
<feature type="splice variant" id="VSP_007529" description="In isoform 2." evidence="17">
    <original>GFLSTGDQAAKGNYGLLDLIQALRWTSENIGFFG</original>
    <variation>EKETIKETISVALQALRTKGGGFIPKQATYKRCE</variation>
    <location>
        <begin position="236"/>
        <end position="269"/>
    </location>
</feature>
<feature type="splice variant" id="VSP_007530" description="In isoform 2." evidence="17">
    <location>
        <begin position="270"/>
        <end position="843"/>
    </location>
</feature>
<feature type="mutagenesis site" description="Decreased protein abundance. Not delivered to the plasma membrane. Heterozygotes mice with this mutation display abnormal social behavior." evidence="15">
    <original>P</original>
    <variation>L</variation>
    <location>
        <position position="89"/>
    </location>
</feature>
<feature type="mutagenesis site" description="No effect on protein abundance. Not associated with changes in subcellular location." evidence="15">
    <original>T</original>
    <variation>I</variation>
    <location>
        <position position="90"/>
    </location>
</feature>
<feature type="mutagenesis site" description="Decreased protein abundance. Not delivered to the plasma membrane." evidence="15">
    <original>L</original>
    <variation>P</variation>
    <location>
        <position position="289"/>
    </location>
</feature>
<feature type="mutagenesis site" description="Decreased protein abundance. Not delivered to the plasma membrane." evidence="15">
    <original>G</original>
    <variation>E</variation>
    <location>
        <position position="317"/>
    </location>
</feature>
<feature type="mutagenesis site" description="Abolishes binding to heparan sulfate and reduces presynaptic differentiation." evidence="16">
    <original>KPRVK</original>
    <variation>APAVA</variation>
    <location>
        <begin position="611"/>
        <end position="615"/>
    </location>
</feature>
<feature type="mutagenesis site" description="Not associated with changes in subcellular location." evidence="15">
    <original>R</original>
    <variation>H</variation>
    <location>
        <position position="736"/>
    </location>
</feature>
<feature type="mutagenesis site" description="Decreased protein abundance. Not associated with changes in subcellular location." evidence="15">
    <original>H</original>
    <variation>Y</variation>
    <location>
        <position position="815"/>
    </location>
</feature>
<feature type="strand" evidence="19">
    <location>
        <begin position="54"/>
        <end position="57"/>
    </location>
</feature>
<feature type="strand" evidence="19">
    <location>
        <begin position="60"/>
        <end position="63"/>
    </location>
</feature>
<feature type="strand" evidence="19">
    <location>
        <begin position="65"/>
        <end position="67"/>
    </location>
</feature>
<feature type="strand" evidence="19">
    <location>
        <begin position="77"/>
        <end position="84"/>
    </location>
</feature>
<feature type="helix" evidence="19">
    <location>
        <begin position="91"/>
        <end position="93"/>
    </location>
</feature>
<feature type="strand" evidence="19">
    <location>
        <begin position="105"/>
        <end position="109"/>
    </location>
</feature>
<feature type="strand" evidence="19">
    <location>
        <begin position="122"/>
        <end position="124"/>
    </location>
</feature>
<feature type="turn" evidence="19">
    <location>
        <begin position="128"/>
        <end position="130"/>
    </location>
</feature>
<feature type="helix" evidence="19">
    <location>
        <begin position="133"/>
        <end position="137"/>
    </location>
</feature>
<feature type="helix" evidence="19">
    <location>
        <begin position="139"/>
        <end position="145"/>
    </location>
</feature>
<feature type="strand" evidence="19">
    <location>
        <begin position="147"/>
        <end position="149"/>
    </location>
</feature>
<feature type="strand" evidence="19">
    <location>
        <begin position="155"/>
        <end position="160"/>
    </location>
</feature>
<feature type="strand" evidence="19">
    <location>
        <begin position="193"/>
        <end position="198"/>
    </location>
</feature>
<feature type="strand" evidence="19">
    <location>
        <begin position="202"/>
        <end position="206"/>
    </location>
</feature>
<feature type="helix" evidence="19">
    <location>
        <begin position="209"/>
        <end position="211"/>
    </location>
</feature>
<feature type="helix" evidence="19">
    <location>
        <begin position="215"/>
        <end position="221"/>
    </location>
</feature>
<feature type="strand" evidence="19">
    <location>
        <begin position="224"/>
        <end position="228"/>
    </location>
</feature>
<feature type="helix" evidence="19">
    <location>
        <begin position="233"/>
        <end position="237"/>
    </location>
</feature>
<feature type="strand" evidence="19">
    <location>
        <begin position="241"/>
        <end position="245"/>
    </location>
</feature>
<feature type="helix" evidence="19">
    <location>
        <begin position="249"/>
        <end position="264"/>
    </location>
</feature>
<feature type="helix" evidence="19">
    <location>
        <begin position="266"/>
        <end position="268"/>
    </location>
</feature>
<feature type="strand" evidence="19">
    <location>
        <begin position="270"/>
        <end position="280"/>
    </location>
</feature>
<feature type="helix" evidence="19">
    <location>
        <begin position="282"/>
        <end position="290"/>
    </location>
</feature>
<feature type="strand" evidence="19">
    <location>
        <begin position="310"/>
        <end position="316"/>
    </location>
</feature>
<feature type="strand" evidence="19">
    <location>
        <begin position="319"/>
        <end position="321"/>
    </location>
</feature>
<feature type="strand" evidence="19">
    <location>
        <begin position="324"/>
        <end position="327"/>
    </location>
</feature>
<feature type="helix" evidence="19">
    <location>
        <begin position="329"/>
        <end position="339"/>
    </location>
</feature>
<feature type="helix" evidence="19">
    <location>
        <begin position="347"/>
        <end position="356"/>
    </location>
</feature>
<feature type="helix" evidence="19">
    <location>
        <begin position="359"/>
        <end position="363"/>
    </location>
</feature>
<feature type="strand" evidence="19">
    <location>
        <begin position="375"/>
        <end position="377"/>
    </location>
</feature>
<feature type="strand" evidence="19">
    <location>
        <begin position="382"/>
        <end position="385"/>
    </location>
</feature>
<feature type="helix" evidence="19">
    <location>
        <begin position="389"/>
        <end position="395"/>
    </location>
</feature>
<feature type="strand" evidence="19">
    <location>
        <begin position="402"/>
        <end position="408"/>
    </location>
</feature>
<feature type="turn" evidence="19">
    <location>
        <begin position="409"/>
        <end position="412"/>
    </location>
</feature>
<feature type="helix" evidence="19">
    <location>
        <begin position="413"/>
        <end position="416"/>
    </location>
</feature>
<feature type="helix" evidence="19">
    <location>
        <begin position="417"/>
        <end position="419"/>
    </location>
</feature>
<feature type="strand" evidence="19">
    <location>
        <begin position="422"/>
        <end position="424"/>
    </location>
</feature>
<feature type="helix" evidence="19">
    <location>
        <begin position="428"/>
        <end position="443"/>
    </location>
</feature>
<feature type="helix" evidence="19">
    <location>
        <begin position="451"/>
        <end position="459"/>
    </location>
</feature>
<feature type="helix" evidence="19">
    <location>
        <begin position="469"/>
        <end position="484"/>
    </location>
</feature>
<feature type="helix" evidence="19">
    <location>
        <begin position="486"/>
        <end position="498"/>
    </location>
</feature>
<feature type="strand" evidence="19">
    <location>
        <begin position="503"/>
        <end position="508"/>
    </location>
</feature>
<feature type="turn" evidence="19">
    <location>
        <begin position="525"/>
        <end position="528"/>
    </location>
</feature>
<feature type="helix" evidence="19">
    <location>
        <begin position="529"/>
        <end position="532"/>
    </location>
</feature>
<feature type="turn" evidence="19">
    <location>
        <begin position="536"/>
        <end position="538"/>
    </location>
</feature>
<feature type="strand" evidence="19">
    <location>
        <begin position="542"/>
        <end position="544"/>
    </location>
</feature>
<feature type="helix" evidence="19">
    <location>
        <begin position="550"/>
        <end position="569"/>
    </location>
</feature>
<feature type="strand" evidence="19">
    <location>
        <begin position="572"/>
        <end position="576"/>
    </location>
</feature>
<feature type="turn" evidence="19">
    <location>
        <begin position="600"/>
        <end position="602"/>
    </location>
</feature>
<feature type="strand" evidence="19">
    <location>
        <begin position="604"/>
        <end position="611"/>
    </location>
</feature>
<feature type="strand" evidence="19">
    <location>
        <begin position="613"/>
        <end position="617"/>
    </location>
</feature>
<feature type="helix" evidence="19">
    <location>
        <begin position="620"/>
        <end position="627"/>
    </location>
</feature>
<feature type="helix" evidence="19">
    <location>
        <begin position="630"/>
        <end position="633"/>
    </location>
</feature>
<reference key="1">
    <citation type="journal article" date="2003" name="DNA Res.">
        <title>Prediction of the coding sequences of mouse homologues of KIAA gene: II. The complete nucleotide sequences of 400 mouse KIAA-homologous cDNAs identified by screening of terminal sequences of cDNA clones randomly sampled from size-fractionated libraries.</title>
        <authorList>
            <person name="Okazaki N."/>
            <person name="Kikuno R."/>
            <person name="Ohara R."/>
            <person name="Inamoto S."/>
            <person name="Aizawa H."/>
            <person name="Yuasa S."/>
            <person name="Nakajima D."/>
            <person name="Nagase T."/>
            <person name="Ohara O."/>
            <person name="Koga H."/>
        </authorList>
    </citation>
    <scope>NUCLEOTIDE SEQUENCE [LARGE SCALE MRNA] (ISOFORM 1)</scope>
    <source>
        <tissue>Brain</tissue>
    </source>
</reference>
<reference key="2">
    <citation type="journal article" date="2004" name="Genome Res.">
        <title>The status, quality, and expansion of the NIH full-length cDNA project: the Mammalian Gene Collection (MGC).</title>
        <authorList>
            <consortium name="The MGC Project Team"/>
        </authorList>
    </citation>
    <scope>NUCLEOTIDE SEQUENCE [LARGE SCALE MRNA] (ISOFORM 2)</scope>
</reference>
<reference key="3">
    <citation type="journal article" date="2000" name="Cell">
        <title>Neuroligin expressed in nonneuronal cells triggers presynaptic development in contacting axons.</title>
        <authorList>
            <person name="Scheiffele P."/>
            <person name="Fan J."/>
            <person name="Choih J."/>
            <person name="Fetter R."/>
            <person name="Serafini T."/>
        </authorList>
    </citation>
    <scope>FUNCTION</scope>
</reference>
<reference key="4">
    <citation type="journal article" date="2001" name="Glia">
        <title>Neuroligin 3 is a vertebrate gliotactin expressed in the olfactory ensheathing glia, a growth-promoting class of macroglia.</title>
        <authorList>
            <person name="Gilbert M."/>
            <person name="Smith J."/>
            <person name="Roskams A.J."/>
            <person name="Auld V.J."/>
        </authorList>
    </citation>
    <scope>TISSUE SPECIFICITY</scope>
</reference>
<reference key="5">
    <citation type="journal article" date="2004" name="Cell">
        <title>Neurexins induce differentiation of GABA and glutamate postsynaptic specializations via neuroligins.</title>
        <authorList>
            <person name="Graf E.R."/>
            <person name="Zhang X."/>
            <person name="Jin S.X."/>
            <person name="Linhoff M.W."/>
            <person name="Craig A.M."/>
        </authorList>
    </citation>
    <scope>FUNCTION</scope>
    <scope>SUBCELLULAR LOCATION</scope>
</reference>
<reference key="6">
    <citation type="journal article" date="2006" name="Neuron">
        <title>Neuroligins determine synapse maturation and function.</title>
        <authorList>
            <person name="Varoqueaux F."/>
            <person name="Aramuni G."/>
            <person name="Rawson R.L."/>
            <person name="Mohrmann R."/>
            <person name="Missler M."/>
            <person name="Gottmann K."/>
            <person name="Zhang W."/>
            <person name="Sudhof T.C."/>
            <person name="Brose N."/>
        </authorList>
    </citation>
    <scope>DISRUPTION PHENOTYPE</scope>
    <scope>FUNCTION</scope>
    <scope>TISSUE SPECIFICITY</scope>
</reference>
<reference key="7">
    <citation type="journal article" date="2007" name="Eur. J. Neurosci.">
        <title>Neuroligin-3 is a neuronal adhesion protein at GABAergic and glutamatergic synapses.</title>
        <authorList>
            <person name="Budreck E.C."/>
            <person name="Scheiffele P."/>
        </authorList>
    </citation>
    <scope>INTERACTION WITH NLGN3</scope>
</reference>
<reference key="8">
    <citation type="journal article" date="2008" name="Proc. Natl. Acad. Sci. U.S.A.">
        <title>Unusually rapid evolution of neuroligin-4 in mice.</title>
        <authorList>
            <person name="Bolliger M.F."/>
            <person name="Pei J."/>
            <person name="Maxeiner S."/>
            <person name="Boucard A.A."/>
            <person name="Grishin N.V."/>
            <person name="Sudhof T.C."/>
        </authorList>
    </citation>
    <scope>TISSUE SPECIFICITY</scope>
</reference>
<reference key="9">
    <citation type="journal article" date="2009" name="Proc. Natl. Acad. Sci. U.S.A.">
        <title>The synaptic proteins neurexins and neuroligins are widely expressed in the vascular system and contribute to its functions.</title>
        <authorList>
            <person name="Bottos A."/>
            <person name="Destro E."/>
            <person name="Rissone A."/>
            <person name="Graziano S."/>
            <person name="Cordara G."/>
            <person name="Assenzio B."/>
            <person name="Cera M.R."/>
            <person name="Mascia L."/>
            <person name="Bussolino F."/>
            <person name="Arese M."/>
        </authorList>
    </citation>
    <scope>TISSUE SPECIFICITY</scope>
</reference>
<reference key="10">
    <citation type="journal article" date="2010" name="Cell">
        <title>A tissue-specific atlas of mouse protein phosphorylation and expression.</title>
        <authorList>
            <person name="Huttlin E.L."/>
            <person name="Jedrychowski M.P."/>
            <person name="Elias J.E."/>
            <person name="Goswami T."/>
            <person name="Rad R."/>
            <person name="Beausoleil S.A."/>
            <person name="Villen J."/>
            <person name="Haas W."/>
            <person name="Sowa M.E."/>
            <person name="Gygi S.P."/>
        </authorList>
    </citation>
    <scope>IDENTIFICATION BY MASS SPECTROMETRY [LARGE SCALE ANALYSIS]</scope>
    <source>
        <tissue>Brain</tissue>
    </source>
</reference>
<reference key="11">
    <citation type="journal article" date="2010" name="J. Neurosci.">
        <title>Neuroligin-1 deletion results in impaired spatial memory and increased repetitive behavior.</title>
        <authorList>
            <person name="Blundell J."/>
            <person name="Blaiss C.A."/>
            <person name="Etherton M.R."/>
            <person name="Espinosa F."/>
            <person name="Tabuchi K."/>
            <person name="Walz C."/>
            <person name="Bolliger M.F."/>
            <person name="Sudhof T.C."/>
            <person name="Powell C.M."/>
        </authorList>
    </citation>
    <scope>DISRUPTION PHENOTYPE</scope>
</reference>
<reference key="12">
    <citation type="journal article" date="2013" name="Proc. Natl. Acad. Sci. U.S.A.">
        <title>Neuroligin-1 links neuronal activity to sleep-wake regulation.</title>
        <authorList>
            <person name="El Helou J."/>
            <person name="Belanger-Nelson E."/>
            <person name="Freyburger M."/>
            <person name="Dorsaz S."/>
            <person name="Curie T."/>
            <person name="La Spada F."/>
            <person name="Gaudreault P.O."/>
            <person name="Beaumont E."/>
            <person name="Pouliot P."/>
            <person name="Lesage F."/>
            <person name="Frank M.G."/>
            <person name="Franken P."/>
            <person name="Mongrain V."/>
        </authorList>
    </citation>
    <scope>FUNCTION</scope>
    <scope>DISRUPTION PHENOTYPE</scope>
    <scope>INDUCTION</scope>
</reference>
<reference key="13">
    <citation type="journal article" date="2017" name="PLoS Genet.">
        <title>Functional significance of rare neuroligin 1 variants found in autism.</title>
        <authorList>
            <person name="Nakanishi M."/>
            <person name="Nomura J."/>
            <person name="Ji X."/>
            <person name="Tamada K."/>
            <person name="Arai T."/>
            <person name="Takahashi E."/>
            <person name="Bucan M."/>
            <person name="Takumi T."/>
        </authorList>
    </citation>
    <scope>FUNCTION</scope>
    <scope>MUTAGENESIS OF PRO-89; THR-90; LEU-289; GLY-317; ARG-736 AND HIS-815</scope>
</reference>
<reference key="14">
    <citation type="journal article" date="2017" name="PLoS Genet.">
        <title>Correction: Functional significance of rare neuroligin 1 variants found in autism.</title>
        <authorList>
            <person name="Nakanishi M."/>
            <person name="Nomura J."/>
            <person name="Ji X."/>
            <person name="Tamada K."/>
            <person name="Arai T."/>
            <person name="Takahashi E."/>
            <person name="Bucan M."/>
            <person name="Takumi T."/>
        </authorList>
    </citation>
    <scope>ERRATUM OF PUBMED:28841651</scope>
</reference>
<reference key="15">
    <citation type="journal article" date="2018" name="Cell">
        <title>Heparan Sulfate Organizes Neuronal Synapses through Neurexin Partnerships.</title>
        <authorList>
            <person name="Zhang P."/>
            <person name="Lu H."/>
            <person name="Peixoto R.T."/>
            <person name="Pines M.K."/>
            <person name="Ge Y."/>
            <person name="Oku S."/>
            <person name="Siddiqui T.J."/>
            <person name="Xie Y."/>
            <person name="Wu W."/>
            <person name="Archer-Hartmann S."/>
            <person name="Yoshida K."/>
            <person name="Tanaka K.F."/>
            <person name="Aricescu A.R."/>
            <person name="Azadi P."/>
            <person name="Gordon M.D."/>
            <person name="Sabatini B.L."/>
            <person name="Wong R.O.L."/>
            <person name="Craig A.M."/>
        </authorList>
    </citation>
    <scope>FUNCTION</scope>
    <scope>INTERACTION WITH NEUREXINS</scope>
    <scope>MUTAGENESIS OF 611-LYS--LYS-615</scope>
</reference>
<reference key="16">
    <citation type="journal article" date="2008" name="Nat. Struct. Mol. Biol.">
        <title>Structural basis for synaptic adhesion mediated by neuroligin-neurexin interactions.</title>
        <authorList>
            <person name="Chen X."/>
            <person name="Liu H."/>
            <person name="Shim A.H."/>
            <person name="Focia P.J."/>
            <person name="He X."/>
        </authorList>
    </citation>
    <scope>X-RAY CRYSTALLOGRAPHY (2.4 ANGSTROMS) OF 39-635 IN COMPLEX WITH HUMAN NRX1B</scope>
    <scope>DISULFIDE BONDS</scope>
    <scope>GLYCOSYLATION AT ASN-109 AND ASN-547</scope>
</reference>
<sequence>MALPRCMWPNYVWRAMMACVVHRGSGAPLTLCLLGCLLQTFHVLSQKLDDVDPLVTTNFGKIRGIKKELNNEILGPVIQFLGVPYAAPPTGEHRFQPPEPPSPWSDIRNATQFAPVCPQNIIDGRLPEVMLPVWFTNNLDVVSSYVQDQSEDCLYLNIYVPTEDGPLTKKHTDDLGDNDGAEDEDIRDSGGPKPVMVYIHGGSYMEGTGNLYDGSVLASYGNVIVITVNYRLGVLGFLSTGDQAAKGNYGLLDLIQALRWTSENIGFFGGDPLRITVFGSGAGGSCVNLLTLSHYSEGNRWSNSTKGLFQRAIAQSGTALSSWAVSFQPAKYARILATKVGCNVSDTVELVECLQKKPYKELVDQDVQPARYHIAFGPVIDGDVIPDDPQILMEQGEFLNYDIMLGVNQGEGLKFVENIVDSDDGVSASDFDFAVSNFVDNLYGYPEGKDVLRETIKFMYTDWADRHNPETRRKTLLALFTDHQWVAPAVATADLHSNFGSPTYFYAFYHHCQTDQVPAWADAAHGDEVPYVLGIPMIGPTELFPCNFSKNDVMLSAVVMTYWTNFAKTGDPNQPVPQDTKFIHTKPNRFEEVAWTRYSQKDQLYLHIGLKPRVKEHYRANKVNLWLELVPHLHNLNDISQYTSTTTKVPSTDITLRPTRKNSTPVTSAFPTAKQDDPKQQPSPFSVDQRDYSTELSVTIAVGASLLFLNILAFAALYYKKDKRRHDVHRRCSPQRTTTNDLTHAPEEEIMSLQMKHTDLDHECESIHPHEVVLRTACPPDYTLAMRRSPDDIPLMTPNTITMIPNTIPGIQPLHTFNTFTGGQNNTLPHPHPHPHSHSTTRV</sequence>
<comment type="function">
    <text evidence="5 7 8 14 15 16">Cell surface protein involved in cell-cell-interactions via its interactions with neurexin family members. Plays a role in synapse function and synaptic signal transmission, and probably mediates its effects by recruiting and clustering other synaptic proteins. May promote the initial formation of synapses, but is not essential for this. In vitro, triggers the de novo formation of presynaptic structures. May be involved in specification of excitatory synapses. Required to maintain wakefulness quality and normal synchrony of cerebral cortex activity during wakefulness and sleep (PubMed:23716671). The protein is involved in nervous system development.</text>
</comment>
<comment type="subunit">
    <text evidence="1 2 9 10 16">Interacts with neurexins NRXN1, NRXN2 and NRXN3 (By similarity). Interaction with neurexins is mediated by heparan sulfate glycan modification on neurexin (PubMed:30100184). Interacts (via its C-terminus) with DLG4/PSD-95 (via PDZ domain 3). Interacts with AIP1, GOPC and PDZRN3 (By similarity). Interacts with NLGN3.</text>
</comment>
<comment type="interaction">
    <interactant intactId="EBI-775037">
        <id>Q99K10</id>
    </interactant>
    <interactant intactId="EBI-26961214">
        <id>P97924-5</id>
        <label>Kalrn</label>
    </interactant>
    <organismsDiffer>true</organismsDiffer>
    <experiments>2</experiments>
</comment>
<comment type="interaction">
    <interactant intactId="EBI-775037">
        <id>Q99K10</id>
    </interactant>
    <interactant intactId="EBI-728180">
        <id>O14522</id>
        <label>PTPRT</label>
    </interactant>
    <organismsDiffer>true</organismsDiffer>
    <experiments>2</experiments>
</comment>
<comment type="interaction">
    <interactant intactId="EBI-15675933">
        <id>Q99K10-1</id>
    </interactant>
    <interactant intactId="EBI-16513622">
        <id>P58400-1</id>
        <label>NRXN1</label>
    </interactant>
    <organismsDiffer>true</organismsDiffer>
    <experiments>3</experiments>
</comment>
<comment type="subcellular location">
    <subcellularLocation>
        <location evidence="2">Cell membrane</location>
        <topology evidence="2">Single-pass type I membrane protein</topology>
    </subcellularLocation>
    <subcellularLocation>
        <location evidence="2">Postsynaptic density</location>
    </subcellularLocation>
    <subcellularLocation>
        <location evidence="2">Synaptic cleft</location>
    </subcellularLocation>
    <subcellularLocation>
        <location evidence="2">Synaptic cell membrane</location>
    </subcellularLocation>
    <text evidence="2">Enriched in synaptic plasma membranes and clustered in synaptic clefts and postsynaptic densities. Colocalized with DLG4/PSD-95 and GRIN1/NMDAR1.</text>
</comment>
<comment type="alternative products">
    <event type="alternative splicing"/>
    <isoform>
        <id>Q99K10-1</id>
        <name>1</name>
        <sequence type="displayed"/>
    </isoform>
    <isoform>
        <id>Q99K10-2</id>
        <name>2</name>
        <sequence type="described" ref="VSP_007528 VSP_007529 VSP_007530"/>
    </isoform>
</comment>
<comment type="tissue specificity">
    <text evidence="6 8 11 12">Brain and arteries (at protein level). Expressed in olfactory bulb. Detected in brain.</text>
</comment>
<comment type="induction">
    <text evidence="14">Expressed in a circadian manner in the brain with highest expression seen at Zeitgeber time (ZT) 6 hours.</text>
</comment>
<comment type="disruption phenotype">
    <text evidence="8 13 14">No obvious phenotype, but mice present subtle behavorial changes with some deficits in spatial learning and memory. In addition, mice have reduced brain volume. Mice lacking both NLGN1 and NLGN2, or NLGN1 and NLGN3, are viable, but have impaired breathing, drastically reduced reproduction rates and striking deficits in raising their offspring. Mice lacking NLGN1, NLGN2 and NLGN3 are born at the expected Mendelian rate, but die shortly after birth due to respiratory failure. They do not show a significant change in the number of synapses, but synapse function is strongly impaired. Mice exhibit social novelty and fear-conditioning deficits and also show reduced wakefulness duration and altered EEG during wakefulness and sleep.</text>
</comment>
<comment type="similarity">
    <text evidence="18">Belongs to the type-B carboxylesterase/lipase family.</text>
</comment>
<comment type="sequence caution" evidence="18">
    <conflict type="erroneous initiation">
        <sequence resource="EMBL-CDS" id="BAC65715"/>
    </conflict>
    <text>Extended N-terminus.</text>
</comment>